<keyword id="KW-0007">Acetylation</keyword>
<keyword id="KW-0150">Chloroplast</keyword>
<keyword id="KW-0472">Membrane</keyword>
<keyword id="KW-0934">Plastid</keyword>
<keyword id="KW-0670">Pyruvate</keyword>
<keyword id="KW-1185">Reference proteome</keyword>
<keyword id="KW-0762">Sugar transport</keyword>
<keyword id="KW-0809">Transit peptide</keyword>
<keyword id="KW-0812">Transmembrane</keyword>
<keyword id="KW-1133">Transmembrane helix</keyword>
<keyword id="KW-0813">Transport</keyword>
<comment type="function">
    <text evidence="2 4 5 6">Phosphoenolpyruvate/phosphate translocator that transports phosphoenolpyruvate (PEP), 2-phosphoglycerate, 3-phosphoglycerate and dihydroxyacetone phosphate. Imports PEP to the chloroplast stroma as one substrate of the shikimate pathway, from which aromatic amino acids and a variety of secondary products derive. Required for correct leaf mesophyll cell development and expression of chlorophyll a/b binding protein 3 (CAB3).</text>
</comment>
<comment type="subcellular location">
    <subcellularLocation>
        <location>Plastid</location>
        <location>Chloroplast membrane</location>
        <topology>Multi-pass membrane protein</topology>
    </subcellularLocation>
</comment>
<comment type="tissue specificity">
    <text evidence="5">Expressed in root columella, lateral root cap and root vasculature tissue. In leaves, highly expressed in xylem parenchyma cells. In flowers, expressed in sepals, petals, filaments of the stamens, anthers and stigma.</text>
</comment>
<comment type="disruption phenotype">
    <text evidence="4 5">Reticulate leaf phenotype. Reduced number of leaf palisade mesophyll cells and increased bundle sheath cells. Small chloroplasts in mesophyll cells. Reduced photosynthetic electron transport rate. Under-expression of CAB3 protein. Reduced levels of aromatic amino acids and phenolic compounds derived from shikimate pathway.</text>
</comment>
<comment type="similarity">
    <text evidence="7">Belongs to the TPT transporter family. PPT (TC 2.A.7.9) subfamily.</text>
</comment>
<name>PPT1_ARATH</name>
<proteinExistence type="evidence at protein level"/>
<feature type="transit peptide" description="Chloroplast" evidence="3 8">
    <location>
        <begin position="1"/>
        <end position="85"/>
    </location>
</feature>
<feature type="chain" id="PRO_0000406099" description="Phosphoenolpyruvate/phosphate translocator 1, chloroplastic">
    <location>
        <begin position="86"/>
        <end position="408"/>
    </location>
</feature>
<feature type="transmembrane region" description="Helical" evidence="1">
    <location>
        <begin position="105"/>
        <end position="125"/>
    </location>
</feature>
<feature type="transmembrane region" description="Helical" evidence="1">
    <location>
        <begin position="137"/>
        <end position="157"/>
    </location>
</feature>
<feature type="transmembrane region" description="Helical" evidence="1">
    <location>
        <begin position="165"/>
        <end position="185"/>
    </location>
</feature>
<feature type="transmembrane region" description="Helical" evidence="1">
    <location>
        <begin position="198"/>
        <end position="218"/>
    </location>
</feature>
<feature type="transmembrane region" description="Helical" evidence="1">
    <location>
        <begin position="222"/>
        <end position="242"/>
    </location>
</feature>
<feature type="transmembrane region" description="Helical" evidence="1">
    <location>
        <begin position="283"/>
        <end position="303"/>
    </location>
</feature>
<feature type="transmembrane region" description="Helical" evidence="1">
    <location>
        <begin position="324"/>
        <end position="346"/>
    </location>
</feature>
<feature type="transmembrane region" description="Helical" evidence="1">
    <location>
        <begin position="377"/>
        <end position="396"/>
    </location>
</feature>
<feature type="domain" description="EamA">
    <location>
        <begin position="124"/>
        <end position="241"/>
    </location>
</feature>
<feature type="modified residue" description="N-acetylalanine" evidence="3 8">
    <location>
        <position position="86"/>
    </location>
</feature>
<feature type="mutagenesis site" description="In cue1-7; strong reticulate leaf phenotype." evidence="2">
    <original>G</original>
    <variation>E</variation>
    <location>
        <position position="251"/>
    </location>
</feature>
<feature type="mutagenesis site" description="In cue1-5; weak reticulate leaf phenotype." evidence="2">
    <original>R</original>
    <variation>C</variation>
    <location>
        <position position="265"/>
    </location>
</feature>
<feature type="mutagenesis site" description="In cue1-3; weak reticulate leaf phenotype." evidence="2">
    <original>A</original>
    <variation>V</variation>
    <location>
        <position position="388"/>
    </location>
</feature>
<feature type="sequence conflict" description="In Ref. 1; AAF63704." evidence="7" ref="1">
    <original>I</original>
    <variation>T</variation>
    <location>
        <position position="153"/>
    </location>
</feature>
<feature type="sequence conflict" description="In Ref. 1; AAB40646." evidence="7" ref="1">
    <original>L</original>
    <variation>I</variation>
    <location>
        <position position="191"/>
    </location>
</feature>
<feature type="sequence conflict" description="In Ref. 5; AAM63308." evidence="7" ref="5">
    <original>K</original>
    <variation>Q</variation>
    <location>
        <position position="322"/>
    </location>
</feature>
<reference key="1">
    <citation type="submission" date="1999-11" db="EMBL/GenBank/DDBJ databases">
        <title>The phosphate/phosphoenolpyruvate translocator gene from Arabidopsis.</title>
        <authorList>
            <person name="Deterding S."/>
            <person name="Fluegge U.-I."/>
            <person name="Fischer K."/>
        </authorList>
    </citation>
    <scope>NUCLEOTIDE SEQUENCE [GENOMIC DNA / MRNA]</scope>
</reference>
<reference key="2">
    <citation type="journal article" date="2000" name="Nature">
        <title>Sequence and analysis of chromosome 5 of the plant Arabidopsis thaliana.</title>
        <authorList>
            <person name="Tabata S."/>
            <person name="Kaneko T."/>
            <person name="Nakamura Y."/>
            <person name="Kotani H."/>
            <person name="Kato T."/>
            <person name="Asamizu E."/>
            <person name="Miyajima N."/>
            <person name="Sasamoto S."/>
            <person name="Kimura T."/>
            <person name="Hosouchi T."/>
            <person name="Kawashima K."/>
            <person name="Kohara M."/>
            <person name="Matsumoto M."/>
            <person name="Matsuno A."/>
            <person name="Muraki A."/>
            <person name="Nakayama S."/>
            <person name="Nakazaki N."/>
            <person name="Naruo K."/>
            <person name="Okumura S."/>
            <person name="Shinpo S."/>
            <person name="Takeuchi C."/>
            <person name="Wada T."/>
            <person name="Watanabe A."/>
            <person name="Yamada M."/>
            <person name="Yasuda M."/>
            <person name="Sato S."/>
            <person name="de la Bastide M."/>
            <person name="Huang E."/>
            <person name="Spiegel L."/>
            <person name="Gnoj L."/>
            <person name="O'Shaughnessy A."/>
            <person name="Preston R."/>
            <person name="Habermann K."/>
            <person name="Murray J."/>
            <person name="Johnson D."/>
            <person name="Rohlfing T."/>
            <person name="Nelson J."/>
            <person name="Stoneking T."/>
            <person name="Pepin K."/>
            <person name="Spieth J."/>
            <person name="Sekhon M."/>
            <person name="Armstrong J."/>
            <person name="Becker M."/>
            <person name="Belter E."/>
            <person name="Cordum H."/>
            <person name="Cordes M."/>
            <person name="Courtney L."/>
            <person name="Courtney W."/>
            <person name="Dante M."/>
            <person name="Du H."/>
            <person name="Edwards J."/>
            <person name="Fryman J."/>
            <person name="Haakensen B."/>
            <person name="Lamar E."/>
            <person name="Latreille P."/>
            <person name="Leonard S."/>
            <person name="Meyer R."/>
            <person name="Mulvaney E."/>
            <person name="Ozersky P."/>
            <person name="Riley A."/>
            <person name="Strowmatt C."/>
            <person name="Wagner-McPherson C."/>
            <person name="Wollam A."/>
            <person name="Yoakum M."/>
            <person name="Bell M."/>
            <person name="Dedhia N."/>
            <person name="Parnell L."/>
            <person name="Shah R."/>
            <person name="Rodriguez M."/>
            <person name="Hoon See L."/>
            <person name="Vil D."/>
            <person name="Baker J."/>
            <person name="Kirchoff K."/>
            <person name="Toth K."/>
            <person name="King L."/>
            <person name="Bahret A."/>
            <person name="Miller B."/>
            <person name="Marra M.A."/>
            <person name="Martienssen R."/>
            <person name="McCombie W.R."/>
            <person name="Wilson R.K."/>
            <person name="Murphy G."/>
            <person name="Bancroft I."/>
            <person name="Volckaert G."/>
            <person name="Wambutt R."/>
            <person name="Duesterhoeft A."/>
            <person name="Stiekema W."/>
            <person name="Pohl T."/>
            <person name="Entian K.-D."/>
            <person name="Terryn N."/>
            <person name="Hartley N."/>
            <person name="Bent E."/>
            <person name="Johnson S."/>
            <person name="Langham S.-A."/>
            <person name="McCullagh B."/>
            <person name="Robben J."/>
            <person name="Grymonprez B."/>
            <person name="Zimmermann W."/>
            <person name="Ramsperger U."/>
            <person name="Wedler H."/>
            <person name="Balke K."/>
            <person name="Wedler E."/>
            <person name="Peters S."/>
            <person name="van Staveren M."/>
            <person name="Dirkse W."/>
            <person name="Mooijman P."/>
            <person name="Klein Lankhorst R."/>
            <person name="Weitzenegger T."/>
            <person name="Bothe G."/>
            <person name="Rose M."/>
            <person name="Hauf J."/>
            <person name="Berneiser S."/>
            <person name="Hempel S."/>
            <person name="Feldpausch M."/>
            <person name="Lamberth S."/>
            <person name="Villarroel R."/>
            <person name="Gielen J."/>
            <person name="Ardiles W."/>
            <person name="Bents O."/>
            <person name="Lemcke K."/>
            <person name="Kolesov G."/>
            <person name="Mayer K.F.X."/>
            <person name="Rudd S."/>
            <person name="Schoof H."/>
            <person name="Schueller C."/>
            <person name="Zaccaria P."/>
            <person name="Mewes H.-W."/>
            <person name="Bevan M."/>
            <person name="Fransz P.F."/>
        </authorList>
    </citation>
    <scope>NUCLEOTIDE SEQUENCE [LARGE SCALE GENOMIC DNA]</scope>
    <source>
        <strain>cv. Columbia</strain>
    </source>
</reference>
<reference key="3">
    <citation type="journal article" date="2017" name="Plant J.">
        <title>Araport11: a complete reannotation of the Arabidopsis thaliana reference genome.</title>
        <authorList>
            <person name="Cheng C.Y."/>
            <person name="Krishnakumar V."/>
            <person name="Chan A.P."/>
            <person name="Thibaud-Nissen F."/>
            <person name="Schobel S."/>
            <person name="Town C.D."/>
        </authorList>
    </citation>
    <scope>GENOME REANNOTATION</scope>
    <source>
        <strain>cv. Columbia</strain>
    </source>
</reference>
<reference key="4">
    <citation type="journal article" date="2003" name="Science">
        <title>Empirical analysis of transcriptional activity in the Arabidopsis genome.</title>
        <authorList>
            <person name="Yamada K."/>
            <person name="Lim J."/>
            <person name="Dale J.M."/>
            <person name="Chen H."/>
            <person name="Shinn P."/>
            <person name="Palm C.J."/>
            <person name="Southwick A.M."/>
            <person name="Wu H.C."/>
            <person name="Kim C.J."/>
            <person name="Nguyen M."/>
            <person name="Pham P.K."/>
            <person name="Cheuk R.F."/>
            <person name="Karlin-Newmann G."/>
            <person name="Liu S.X."/>
            <person name="Lam B."/>
            <person name="Sakano H."/>
            <person name="Wu T."/>
            <person name="Yu G."/>
            <person name="Miranda M."/>
            <person name="Quach H.L."/>
            <person name="Tripp M."/>
            <person name="Chang C.H."/>
            <person name="Lee J.M."/>
            <person name="Toriumi M.J."/>
            <person name="Chan M.M."/>
            <person name="Tang C.C."/>
            <person name="Onodera C.S."/>
            <person name="Deng J.M."/>
            <person name="Akiyama K."/>
            <person name="Ansari Y."/>
            <person name="Arakawa T."/>
            <person name="Banh J."/>
            <person name="Banno F."/>
            <person name="Bowser L."/>
            <person name="Brooks S.Y."/>
            <person name="Carninci P."/>
            <person name="Chao Q."/>
            <person name="Choy N."/>
            <person name="Enju A."/>
            <person name="Goldsmith A.D."/>
            <person name="Gurjal M."/>
            <person name="Hansen N.F."/>
            <person name="Hayashizaki Y."/>
            <person name="Johnson-Hopson C."/>
            <person name="Hsuan V.W."/>
            <person name="Iida K."/>
            <person name="Karnes M."/>
            <person name="Khan S."/>
            <person name="Koesema E."/>
            <person name="Ishida J."/>
            <person name="Jiang P.X."/>
            <person name="Jones T."/>
            <person name="Kawai J."/>
            <person name="Kamiya A."/>
            <person name="Meyers C."/>
            <person name="Nakajima M."/>
            <person name="Narusaka M."/>
            <person name="Seki M."/>
            <person name="Sakurai T."/>
            <person name="Satou M."/>
            <person name="Tamse R."/>
            <person name="Vaysberg M."/>
            <person name="Wallender E.K."/>
            <person name="Wong C."/>
            <person name="Yamamura Y."/>
            <person name="Yuan S."/>
            <person name="Shinozaki K."/>
            <person name="Davis R.W."/>
            <person name="Theologis A."/>
            <person name="Ecker J.R."/>
        </authorList>
    </citation>
    <scope>NUCLEOTIDE SEQUENCE [LARGE SCALE MRNA]</scope>
    <source>
        <strain>cv. Columbia</strain>
    </source>
</reference>
<reference key="5">
    <citation type="submission" date="2002-03" db="EMBL/GenBank/DDBJ databases">
        <title>Full-length cDNA from Arabidopsis thaliana.</title>
        <authorList>
            <person name="Brover V.V."/>
            <person name="Troukhan M.E."/>
            <person name="Alexandrov N.A."/>
            <person name="Lu Y.-P."/>
            <person name="Flavell R.B."/>
            <person name="Feldmann K.A."/>
        </authorList>
    </citation>
    <scope>NUCLEOTIDE SEQUENCE [LARGE SCALE MRNA]</scope>
</reference>
<reference key="6">
    <citation type="journal article" date="1999" name="Plant Cell">
        <title>The phosphoenolpyruvate/phosphate translocator is required for phenolic metabolism, palisade cell development, and plastid-dependent nuclear gene expression.</title>
        <authorList>
            <person name="Streatfield S.J."/>
            <person name="Weber A."/>
            <person name="Kinsman E.A."/>
            <person name="Haeusler R.E."/>
            <person name="Li J."/>
            <person name="Post-Beittenmiller D."/>
            <person name="Kaiser W.M."/>
            <person name="Pyke K.A."/>
            <person name="Fluegge U.I."/>
            <person name="Chory J."/>
        </authorList>
    </citation>
    <scope>FUNCTION</scope>
    <scope>MUTAGENESIS OF GLY-251; ARG-265 AND ALA-388</scope>
</reference>
<reference key="7">
    <citation type="journal article" date="2003" name="Mol. Cell. Proteomics">
        <title>Proteomics of the chloroplast envelope membranes from Arabidopsis thaliana.</title>
        <authorList>
            <person name="Ferro M."/>
            <person name="Salvi D."/>
            <person name="Brugiere S."/>
            <person name="Miras S."/>
            <person name="Kowalski S."/>
            <person name="Louwagie M."/>
            <person name="Garin J."/>
            <person name="Joyard J."/>
            <person name="Rolland N."/>
        </authorList>
    </citation>
    <scope>ACETYLATION AT ALA-86</scope>
    <scope>CLEAVAGE OF TRANSIT PEPTIDE AFTER ALA-85</scope>
    <scope>IDENTIFICATION BY MASS SPECTROMETRY</scope>
    <scope>SUBCELLULAR LOCATION [LARGE SCALE ANALYSIS]</scope>
    <source>
        <strain>cv. Wassilewskija</strain>
    </source>
</reference>
<reference key="8">
    <citation type="journal article" date="2003" name="Plant J.">
        <title>The phenotype of the Arabidopsis cue1 mutant is not simply caused by a general restriction of the shikimate pathway.</title>
        <authorList>
            <person name="Voll L."/>
            <person name="Haeusler R.E."/>
            <person name="Hecker R."/>
            <person name="Weber A."/>
            <person name="Weissenboeck G."/>
            <person name="Fiene G."/>
            <person name="Waffenschmidt S."/>
            <person name="Fluegge U.I."/>
        </authorList>
    </citation>
    <scope>FUNCTION</scope>
    <scope>DISRUPTION PHENOTYPE</scope>
</reference>
<reference key="9">
    <citation type="journal article" date="2003" name="Plant J.">
        <title>Characterization of two functional phosphoenolpyruvate/phosphate translocator (PPT) genes in Arabidopsis--AtPPT1 may be involved in the provision of signals for correct mesophyll development.</title>
        <authorList>
            <person name="Knappe S."/>
            <person name="Loettgert T."/>
            <person name="Schneider A."/>
            <person name="Voll L."/>
            <person name="Fluegge U.I."/>
            <person name="Fischer K."/>
        </authorList>
    </citation>
    <scope>FUNCTION</scope>
    <scope>TISSUE SPECIFICITY</scope>
    <scope>DISRUPTION PHENOTYPE</scope>
</reference>
<reference key="10">
    <citation type="journal article" date="2007" name="Plant Cell Physiol.">
        <title>A cell-free translation and proteoliposome reconstitution system for functional analysis of plant solute transporters.</title>
        <authorList>
            <person name="Nozawa A."/>
            <person name="Nanamiya H."/>
            <person name="Miyata T."/>
            <person name="Linka N."/>
            <person name="Endo Y."/>
            <person name="Weber A.P."/>
            <person name="Tozawa Y."/>
        </authorList>
    </citation>
    <scope>FUNCTION</scope>
</reference>
<reference key="11">
    <citation type="journal article" date="2012" name="Mol. Cell. Proteomics">
        <title>Comparative large-scale characterisation of plant vs. mammal proteins reveals similar and idiosyncratic N-alpha acetylation features.</title>
        <authorList>
            <person name="Bienvenut W.V."/>
            <person name="Sumpton D."/>
            <person name="Martinez A."/>
            <person name="Lilla S."/>
            <person name="Espagne C."/>
            <person name="Meinnel T."/>
            <person name="Giglione C."/>
        </authorList>
    </citation>
    <scope>ACETYLATION [LARGE SCALE ANALYSIS] AT ALA-86</scope>
    <scope>CLEAVAGE OF TRANSIT PEPTIDE [LARGE SCALE ANALYSIS] AFTER ALA-85</scope>
    <scope>IDENTIFICATION BY MASS SPECTROMETRY [LARGE SCALE ANALYSIS]</scope>
</reference>
<reference key="12">
    <citation type="journal article" date="2014" name="Proc. Natl. Acad. Sci. U.S.A.">
        <title>The Golgi localized bifunctional UDP-rhamnose/UDP-galactose transporter family of Arabidopsis.</title>
        <authorList>
            <person name="Rautengarten C."/>
            <person name="Ebert B."/>
            <person name="Moreno I."/>
            <person name="Temple H."/>
            <person name="Herter T."/>
            <person name="Link B."/>
            <person name="Donas-Cofre D."/>
            <person name="Moreno A."/>
            <person name="Saez-Aguayo S."/>
            <person name="Blanco F."/>
            <person name="Mortimer J.C."/>
            <person name="Schultink A."/>
            <person name="Reiter W.D."/>
            <person name="Dupree P."/>
            <person name="Pauly M."/>
            <person name="Heazlewood J.L."/>
            <person name="Scheller H.V."/>
            <person name="Orellana A."/>
        </authorList>
    </citation>
    <scope>GENE FAMILY</scope>
</reference>
<dbReference type="EMBL" id="U66321">
    <property type="protein sequence ID" value="AAB40646.1"/>
    <property type="molecule type" value="mRNA"/>
</dbReference>
<dbReference type="EMBL" id="AF209210">
    <property type="protein sequence ID" value="AAF63704.1"/>
    <property type="molecule type" value="Genomic_DNA"/>
</dbReference>
<dbReference type="EMBL" id="AC051625">
    <property type="status" value="NOT_ANNOTATED_CDS"/>
    <property type="molecule type" value="Genomic_DNA"/>
</dbReference>
<dbReference type="EMBL" id="CP002688">
    <property type="protein sequence ID" value="AED93894.1"/>
    <property type="molecule type" value="Genomic_DNA"/>
</dbReference>
<dbReference type="EMBL" id="AY080788">
    <property type="protein sequence ID" value="AAL87271.1"/>
    <property type="molecule type" value="mRNA"/>
</dbReference>
<dbReference type="EMBL" id="AY133809">
    <property type="protein sequence ID" value="AAM91743.1"/>
    <property type="molecule type" value="mRNA"/>
</dbReference>
<dbReference type="EMBL" id="AY086100">
    <property type="protein sequence ID" value="AAM63308.1"/>
    <property type="molecule type" value="mRNA"/>
</dbReference>
<dbReference type="RefSeq" id="NP_198317.1">
    <property type="nucleotide sequence ID" value="NM_122856.3"/>
</dbReference>
<dbReference type="SMR" id="Q8RXN3"/>
<dbReference type="BioGRID" id="18566">
    <property type="interactions" value="3"/>
</dbReference>
<dbReference type="FunCoup" id="Q8RXN3">
    <property type="interactions" value="3611"/>
</dbReference>
<dbReference type="STRING" id="3702.Q8RXN3"/>
<dbReference type="GlyGen" id="Q8RXN3">
    <property type="glycosylation" value="1 site"/>
</dbReference>
<dbReference type="iPTMnet" id="Q8RXN3"/>
<dbReference type="PaxDb" id="3702-AT5G33320.1"/>
<dbReference type="ProteomicsDB" id="226493"/>
<dbReference type="EnsemblPlants" id="AT5G33320.1">
    <property type="protein sequence ID" value="AT5G33320.1"/>
    <property type="gene ID" value="AT5G33320"/>
</dbReference>
<dbReference type="GeneID" id="833308"/>
<dbReference type="Gramene" id="AT5G33320.1">
    <property type="protein sequence ID" value="AT5G33320.1"/>
    <property type="gene ID" value="AT5G33320"/>
</dbReference>
<dbReference type="KEGG" id="ath:AT5G33320"/>
<dbReference type="Araport" id="AT5G33320"/>
<dbReference type="TAIR" id="AT5G33320">
    <property type="gene designation" value="CUE1"/>
</dbReference>
<dbReference type="eggNOG" id="KOG1441">
    <property type="taxonomic scope" value="Eukaryota"/>
</dbReference>
<dbReference type="HOGENOM" id="CLU_019048_0_0_1"/>
<dbReference type="InParanoid" id="Q8RXN3"/>
<dbReference type="OMA" id="AMFMWIT"/>
<dbReference type="PhylomeDB" id="Q8RXN3"/>
<dbReference type="CD-CODE" id="4299E36E">
    <property type="entry name" value="Nucleolus"/>
</dbReference>
<dbReference type="PRO" id="PR:Q8RXN3"/>
<dbReference type="Proteomes" id="UP000006548">
    <property type="component" value="Chromosome 5"/>
</dbReference>
<dbReference type="ExpressionAtlas" id="Q8RXN3">
    <property type="expression patterns" value="baseline and differential"/>
</dbReference>
<dbReference type="GO" id="GO:0009507">
    <property type="term" value="C:chloroplast"/>
    <property type="evidence" value="ECO:0007005"/>
    <property type="project" value="TAIR"/>
</dbReference>
<dbReference type="GO" id="GO:0009941">
    <property type="term" value="C:chloroplast envelope"/>
    <property type="evidence" value="ECO:0007005"/>
    <property type="project" value="TAIR"/>
</dbReference>
<dbReference type="GO" id="GO:0031969">
    <property type="term" value="C:chloroplast membrane"/>
    <property type="evidence" value="ECO:0007669"/>
    <property type="project" value="UniProtKB-SubCell"/>
</dbReference>
<dbReference type="GO" id="GO:0009536">
    <property type="term" value="C:plastid"/>
    <property type="evidence" value="ECO:0007005"/>
    <property type="project" value="TAIR"/>
</dbReference>
<dbReference type="GO" id="GO:0009528">
    <property type="term" value="C:plastid inner membrane"/>
    <property type="evidence" value="ECO:0000304"/>
    <property type="project" value="TAIR"/>
</dbReference>
<dbReference type="GO" id="GO:0015121">
    <property type="term" value="F:phosphoenolpyruvate:phosphate antiporter activity"/>
    <property type="evidence" value="ECO:0000314"/>
    <property type="project" value="UniProtKB"/>
</dbReference>
<dbReference type="GO" id="GO:0015120">
    <property type="term" value="F:phosphoglycerate transmembrane transporter activity"/>
    <property type="evidence" value="ECO:0000314"/>
    <property type="project" value="UniProtKB"/>
</dbReference>
<dbReference type="GO" id="GO:0015714">
    <property type="term" value="P:phosphoenolpyruvate transport"/>
    <property type="evidence" value="ECO:0000314"/>
    <property type="project" value="UniProtKB"/>
</dbReference>
<dbReference type="GO" id="GO:0015713">
    <property type="term" value="P:phosphoglycerate transmembrane transport"/>
    <property type="evidence" value="ECO:0000314"/>
    <property type="project" value="UniProtKB"/>
</dbReference>
<dbReference type="InterPro" id="IPR004853">
    <property type="entry name" value="Sugar_P_trans_dom"/>
</dbReference>
<dbReference type="InterPro" id="IPR004696">
    <property type="entry name" value="Tpt_PEP_transl"/>
</dbReference>
<dbReference type="InterPro" id="IPR050186">
    <property type="entry name" value="TPT_transporter"/>
</dbReference>
<dbReference type="NCBIfam" id="TIGR00817">
    <property type="entry name" value="tpt"/>
    <property type="match status" value="1"/>
</dbReference>
<dbReference type="PANTHER" id="PTHR11132">
    <property type="entry name" value="SOLUTE CARRIER FAMILY 35"/>
    <property type="match status" value="1"/>
</dbReference>
<dbReference type="Pfam" id="PF03151">
    <property type="entry name" value="TPT"/>
    <property type="match status" value="1"/>
</dbReference>
<dbReference type="SUPFAM" id="SSF103481">
    <property type="entry name" value="Multidrug resistance efflux transporter EmrE"/>
    <property type="match status" value="2"/>
</dbReference>
<evidence type="ECO:0000255" key="1"/>
<evidence type="ECO:0000269" key="2">
    <source>
    </source>
</evidence>
<evidence type="ECO:0000269" key="3">
    <source>
    </source>
</evidence>
<evidence type="ECO:0000269" key="4">
    <source>
    </source>
</evidence>
<evidence type="ECO:0000269" key="5">
    <source>
    </source>
</evidence>
<evidence type="ECO:0000269" key="6">
    <source>
    </source>
</evidence>
<evidence type="ECO:0000305" key="7"/>
<evidence type="ECO:0007744" key="8">
    <source>
    </source>
</evidence>
<organism>
    <name type="scientific">Arabidopsis thaliana</name>
    <name type="common">Mouse-ear cress</name>
    <dbReference type="NCBI Taxonomy" id="3702"/>
    <lineage>
        <taxon>Eukaryota</taxon>
        <taxon>Viridiplantae</taxon>
        <taxon>Streptophyta</taxon>
        <taxon>Embryophyta</taxon>
        <taxon>Tracheophyta</taxon>
        <taxon>Spermatophyta</taxon>
        <taxon>Magnoliopsida</taxon>
        <taxon>eudicotyledons</taxon>
        <taxon>Gunneridae</taxon>
        <taxon>Pentapetalae</taxon>
        <taxon>rosids</taxon>
        <taxon>malvids</taxon>
        <taxon>Brassicales</taxon>
        <taxon>Brassicaceae</taxon>
        <taxon>Camelineae</taxon>
        <taxon>Arabidopsis</taxon>
    </lineage>
</organism>
<protein>
    <recommendedName>
        <fullName>Phosphoenolpyruvate/phosphate translocator 1, chloroplastic</fullName>
        <shortName>AtPPT1</shortName>
    </recommendedName>
    <alternativeName>
        <fullName>Protein CAB UNDEREXPRESSED 1</fullName>
    </alternativeName>
</protein>
<accession>Q8RXN3</accession>
<accession>P92991</accession>
<accession>Q8LDB3</accession>
<accession>Q9M669</accession>
<sequence>MQSSAVFSLSPSLPLLKPRRLSLRHHPITTAASSSDLNVSPNVVSIPSLSRRSWRLASSDSPLRAWSGVPSPISHSLDTNRFRTAATAVPESAEEGDNSGKLTKVLELGLLFAMWYLFNIYFNIYNKQVLKALHAPMTVTLVQFAVGSVLITIMWVLNLYKRPKISGAQLAAILPLAVVHTLGNLFTNMSLGKVSVSFTHTIKAMEPFFSVLLSAMFLGEKPTPWVLGAIVPIVGGVALASISEVSFNWAGFSSAMASNLTNQSRNVLSKKVMVKKDDSLDNITLFSIITLMSLVLMAPVTFFTEGIKFTPSYIQSAGVNVKQIYTKSLIAALCFHAYQQVSYMILARVSPVTHSVGNCVKRVVVIVSSVIFFKTPVSPVNAFGTGIALAGVFLYSRVKGIKPKPKTA</sequence>
<gene>
    <name type="primary">PPT1</name>
    <name type="synonym">CUE1</name>
    <name type="ordered locus">At5g33320</name>
    <name type="ORF">F19N2.40</name>
</gene>